<sequence>MAVVSMKQLLESGVHFGHQTRRWNPKMAPYIFTSRKDIHIIDLKRTALEIEKAYAALYDIAKDGGTVLFVGTKKQASEAIKEEAIRAGQFYVDHRWLGGTLTNFKTIRQRIKLLHSLYAAEADGTWAKLPKKEVLGLSRQRIKLERFLGGIKDMQRIPQALFVVDPRTEEIAVKEARKLGIPVFGIVDTNCDPDLVDYIIPANDDAIRAVKLLTWVMANAVVEANGGVVEKYEDEENAPFEQDEPRKPSQKPKQNRPENKPRFDKQAPRAAAKPEVKAEVKPEVKPEVKVEAKVAPKVVAEVKPTEDLSTLKVAELKELAKAKGIENYSKLRKAELVEALSK</sequence>
<evidence type="ECO:0000255" key="1">
    <source>
        <dbReference type="HAMAP-Rule" id="MF_00291"/>
    </source>
</evidence>
<evidence type="ECO:0000256" key="2">
    <source>
        <dbReference type="SAM" id="MobiDB-lite"/>
    </source>
</evidence>
<evidence type="ECO:0000305" key="3"/>
<feature type="chain" id="PRO_1000078867" description="Small ribosomal subunit protein uS2">
    <location>
        <begin position="1"/>
        <end position="342"/>
    </location>
</feature>
<feature type="region of interest" description="Disordered" evidence="2">
    <location>
        <begin position="235"/>
        <end position="283"/>
    </location>
</feature>
<feature type="compositionally biased region" description="Basic and acidic residues" evidence="2">
    <location>
        <begin position="255"/>
        <end position="283"/>
    </location>
</feature>
<proteinExistence type="inferred from homology"/>
<name>RS2_ACHLI</name>
<dbReference type="EMBL" id="CP000896">
    <property type="protein sequence ID" value="ABX81756.1"/>
    <property type="molecule type" value="Genomic_DNA"/>
</dbReference>
<dbReference type="SMR" id="A9NHC6"/>
<dbReference type="STRING" id="441768.ACL_1157"/>
<dbReference type="KEGG" id="acl:ACL_1157"/>
<dbReference type="eggNOG" id="COG0052">
    <property type="taxonomic scope" value="Bacteria"/>
</dbReference>
<dbReference type="HOGENOM" id="CLU_040318_0_2_14"/>
<dbReference type="OrthoDB" id="9808036at2"/>
<dbReference type="Proteomes" id="UP000008558">
    <property type="component" value="Chromosome"/>
</dbReference>
<dbReference type="GO" id="GO:0022627">
    <property type="term" value="C:cytosolic small ribosomal subunit"/>
    <property type="evidence" value="ECO:0007669"/>
    <property type="project" value="TreeGrafter"/>
</dbReference>
<dbReference type="GO" id="GO:0003735">
    <property type="term" value="F:structural constituent of ribosome"/>
    <property type="evidence" value="ECO:0007669"/>
    <property type="project" value="InterPro"/>
</dbReference>
<dbReference type="GO" id="GO:0006353">
    <property type="term" value="P:DNA-templated transcription termination"/>
    <property type="evidence" value="ECO:0007669"/>
    <property type="project" value="InterPro"/>
</dbReference>
<dbReference type="GO" id="GO:0006412">
    <property type="term" value="P:translation"/>
    <property type="evidence" value="ECO:0007669"/>
    <property type="project" value="UniProtKB-UniRule"/>
</dbReference>
<dbReference type="CDD" id="cd01425">
    <property type="entry name" value="RPS2"/>
    <property type="match status" value="1"/>
</dbReference>
<dbReference type="FunFam" id="1.10.287.610:FF:000001">
    <property type="entry name" value="30S ribosomal protein S2"/>
    <property type="match status" value="1"/>
</dbReference>
<dbReference type="Gene3D" id="1.10.720.10">
    <property type="match status" value="1"/>
</dbReference>
<dbReference type="Gene3D" id="3.40.50.10490">
    <property type="entry name" value="Glucose-6-phosphate isomerase like protein, domain 1"/>
    <property type="match status" value="1"/>
</dbReference>
<dbReference type="Gene3D" id="1.10.287.610">
    <property type="entry name" value="Helix hairpin bin"/>
    <property type="match status" value="1"/>
</dbReference>
<dbReference type="HAMAP" id="MF_00291_B">
    <property type="entry name" value="Ribosomal_uS2_B"/>
    <property type="match status" value="1"/>
</dbReference>
<dbReference type="InterPro" id="IPR011112">
    <property type="entry name" value="Rho-like_N"/>
</dbReference>
<dbReference type="InterPro" id="IPR036269">
    <property type="entry name" value="Rho_N_sf"/>
</dbReference>
<dbReference type="InterPro" id="IPR001865">
    <property type="entry name" value="Ribosomal_uS2"/>
</dbReference>
<dbReference type="InterPro" id="IPR005706">
    <property type="entry name" value="Ribosomal_uS2_bac/mit/plastid"/>
</dbReference>
<dbReference type="InterPro" id="IPR018130">
    <property type="entry name" value="Ribosomal_uS2_CS"/>
</dbReference>
<dbReference type="InterPro" id="IPR023591">
    <property type="entry name" value="Ribosomal_uS2_flav_dom_sf"/>
</dbReference>
<dbReference type="NCBIfam" id="TIGR01011">
    <property type="entry name" value="rpsB_bact"/>
    <property type="match status" value="1"/>
</dbReference>
<dbReference type="PANTHER" id="PTHR12534">
    <property type="entry name" value="30S RIBOSOMAL PROTEIN S2 PROKARYOTIC AND ORGANELLAR"/>
    <property type="match status" value="1"/>
</dbReference>
<dbReference type="PANTHER" id="PTHR12534:SF0">
    <property type="entry name" value="SMALL RIBOSOMAL SUBUNIT PROTEIN US2M"/>
    <property type="match status" value="1"/>
</dbReference>
<dbReference type="Pfam" id="PF07498">
    <property type="entry name" value="Rho_N"/>
    <property type="match status" value="1"/>
</dbReference>
<dbReference type="Pfam" id="PF00318">
    <property type="entry name" value="Ribosomal_S2"/>
    <property type="match status" value="1"/>
</dbReference>
<dbReference type="PRINTS" id="PR00395">
    <property type="entry name" value="RIBOSOMALS2"/>
</dbReference>
<dbReference type="SMART" id="SM00959">
    <property type="entry name" value="Rho_N"/>
    <property type="match status" value="1"/>
</dbReference>
<dbReference type="SUPFAM" id="SSF68912">
    <property type="entry name" value="Rho N-terminal domain-like"/>
    <property type="match status" value="1"/>
</dbReference>
<dbReference type="SUPFAM" id="SSF52313">
    <property type="entry name" value="Ribosomal protein S2"/>
    <property type="match status" value="1"/>
</dbReference>
<dbReference type="PROSITE" id="PS00962">
    <property type="entry name" value="RIBOSOMAL_S2_1"/>
    <property type="match status" value="1"/>
</dbReference>
<dbReference type="PROSITE" id="PS00963">
    <property type="entry name" value="RIBOSOMAL_S2_2"/>
    <property type="match status" value="1"/>
</dbReference>
<protein>
    <recommendedName>
        <fullName evidence="1">Small ribosomal subunit protein uS2</fullName>
    </recommendedName>
    <alternativeName>
        <fullName evidence="3">30S ribosomal protein S2</fullName>
    </alternativeName>
</protein>
<comment type="similarity">
    <text evidence="1">Belongs to the universal ribosomal protein uS2 family.</text>
</comment>
<gene>
    <name evidence="1" type="primary">rpsB</name>
    <name type="ordered locus">ACL_1157</name>
</gene>
<accession>A9NHC6</accession>
<organism>
    <name type="scientific">Acholeplasma laidlawii (strain PG-8A)</name>
    <dbReference type="NCBI Taxonomy" id="441768"/>
    <lineage>
        <taxon>Bacteria</taxon>
        <taxon>Bacillati</taxon>
        <taxon>Mycoplasmatota</taxon>
        <taxon>Mollicutes</taxon>
        <taxon>Acholeplasmatales</taxon>
        <taxon>Acholeplasmataceae</taxon>
        <taxon>Acholeplasma</taxon>
    </lineage>
</organism>
<keyword id="KW-1185">Reference proteome</keyword>
<keyword id="KW-0687">Ribonucleoprotein</keyword>
<keyword id="KW-0689">Ribosomal protein</keyword>
<reference key="1">
    <citation type="journal article" date="2011" name="J. Bacteriol.">
        <title>Complete genome and proteome of Acholeplasma laidlawii.</title>
        <authorList>
            <person name="Lazarev V.N."/>
            <person name="Levitskii S.A."/>
            <person name="Basovskii Y.I."/>
            <person name="Chukin M.M."/>
            <person name="Akopian T.A."/>
            <person name="Vereshchagin V.V."/>
            <person name="Kostrjukova E.S."/>
            <person name="Kovaleva G.Y."/>
            <person name="Kazanov M.D."/>
            <person name="Malko D.B."/>
            <person name="Vitreschak A.G."/>
            <person name="Sernova N.V."/>
            <person name="Gelfand M.S."/>
            <person name="Demina I.A."/>
            <person name="Serebryakova M.V."/>
            <person name="Galyamina M.A."/>
            <person name="Vtyurin N.N."/>
            <person name="Rogov S.I."/>
            <person name="Alexeev D.G."/>
            <person name="Ladygina V.G."/>
            <person name="Govorun V.M."/>
        </authorList>
    </citation>
    <scope>NUCLEOTIDE SEQUENCE [LARGE SCALE GENOMIC DNA]</scope>
    <source>
        <strain>PG-8A</strain>
    </source>
</reference>